<comment type="function">
    <text evidence="1">Produces ATP from ADP in the presence of a proton gradient across the membrane. The catalytic sites are hosted primarily by the beta subunits.</text>
</comment>
<comment type="catalytic activity">
    <reaction evidence="1">
        <text>ATP + H2O + 4 H(+)(in) = ADP + phosphate + 5 H(+)(out)</text>
        <dbReference type="Rhea" id="RHEA:57720"/>
        <dbReference type="ChEBI" id="CHEBI:15377"/>
        <dbReference type="ChEBI" id="CHEBI:15378"/>
        <dbReference type="ChEBI" id="CHEBI:30616"/>
        <dbReference type="ChEBI" id="CHEBI:43474"/>
        <dbReference type="ChEBI" id="CHEBI:456216"/>
        <dbReference type="EC" id="7.1.2.2"/>
    </reaction>
</comment>
<comment type="subunit">
    <text evidence="1">F-type ATPases have 2 components, CF(1) - the catalytic core - and CF(0) - the membrane proton channel. CF(1) has five subunits: alpha(3), beta(3), gamma(1), delta(1), epsilon(1). CF(0) has three main subunits: a(1), b(2) and c(9-12). The alpha and beta chains form an alternating ring which encloses part of the gamma chain. CF(1) is attached to CF(0) by a central stalk formed by the gamma and epsilon chains, while a peripheral stalk is formed by the delta and b chains.</text>
</comment>
<comment type="subcellular location">
    <subcellularLocation>
        <location evidence="1">Cell inner membrane</location>
        <topology evidence="1">Peripheral membrane protein</topology>
    </subcellularLocation>
</comment>
<comment type="similarity">
    <text evidence="1">Belongs to the ATPase alpha/beta chains family.</text>
</comment>
<dbReference type="EC" id="7.1.2.2" evidence="1"/>
<dbReference type="EMBL" id="CR628337">
    <property type="protein sequence ID" value="CAH17154.1"/>
    <property type="molecule type" value="Genomic_DNA"/>
</dbReference>
<dbReference type="RefSeq" id="WP_010948666.1">
    <property type="nucleotide sequence ID" value="NC_006369.1"/>
</dbReference>
<dbReference type="SMR" id="Q5WSG8"/>
<dbReference type="GeneID" id="57036988"/>
<dbReference type="KEGG" id="lpf:lpl2910"/>
<dbReference type="LegioList" id="lpl2910"/>
<dbReference type="HOGENOM" id="CLU_022398_0_2_6"/>
<dbReference type="Proteomes" id="UP000002517">
    <property type="component" value="Chromosome"/>
</dbReference>
<dbReference type="GO" id="GO:0005886">
    <property type="term" value="C:plasma membrane"/>
    <property type="evidence" value="ECO:0007669"/>
    <property type="project" value="UniProtKB-SubCell"/>
</dbReference>
<dbReference type="GO" id="GO:0045259">
    <property type="term" value="C:proton-transporting ATP synthase complex"/>
    <property type="evidence" value="ECO:0007669"/>
    <property type="project" value="UniProtKB-KW"/>
</dbReference>
<dbReference type="GO" id="GO:0005524">
    <property type="term" value="F:ATP binding"/>
    <property type="evidence" value="ECO:0007669"/>
    <property type="project" value="UniProtKB-UniRule"/>
</dbReference>
<dbReference type="GO" id="GO:0016887">
    <property type="term" value="F:ATP hydrolysis activity"/>
    <property type="evidence" value="ECO:0007669"/>
    <property type="project" value="InterPro"/>
</dbReference>
<dbReference type="GO" id="GO:0046933">
    <property type="term" value="F:proton-transporting ATP synthase activity, rotational mechanism"/>
    <property type="evidence" value="ECO:0007669"/>
    <property type="project" value="UniProtKB-UniRule"/>
</dbReference>
<dbReference type="CDD" id="cd18110">
    <property type="entry name" value="ATP-synt_F1_beta_C"/>
    <property type="match status" value="1"/>
</dbReference>
<dbReference type="CDD" id="cd18115">
    <property type="entry name" value="ATP-synt_F1_beta_N"/>
    <property type="match status" value="1"/>
</dbReference>
<dbReference type="CDD" id="cd01133">
    <property type="entry name" value="F1-ATPase_beta_CD"/>
    <property type="match status" value="1"/>
</dbReference>
<dbReference type="FunFam" id="1.10.1140.10:FF:000001">
    <property type="entry name" value="ATP synthase subunit beta"/>
    <property type="match status" value="1"/>
</dbReference>
<dbReference type="FunFam" id="3.40.50.300:FF:000004">
    <property type="entry name" value="ATP synthase subunit beta"/>
    <property type="match status" value="1"/>
</dbReference>
<dbReference type="Gene3D" id="2.40.10.170">
    <property type="match status" value="1"/>
</dbReference>
<dbReference type="Gene3D" id="1.10.1140.10">
    <property type="entry name" value="Bovine Mitochondrial F1-atpase, Atp Synthase Beta Chain, Chain D, domain 3"/>
    <property type="match status" value="1"/>
</dbReference>
<dbReference type="Gene3D" id="3.40.50.300">
    <property type="entry name" value="P-loop containing nucleotide triphosphate hydrolases"/>
    <property type="match status" value="1"/>
</dbReference>
<dbReference type="HAMAP" id="MF_01347">
    <property type="entry name" value="ATP_synth_beta_bact"/>
    <property type="match status" value="1"/>
</dbReference>
<dbReference type="InterPro" id="IPR003593">
    <property type="entry name" value="AAA+_ATPase"/>
</dbReference>
<dbReference type="InterPro" id="IPR055190">
    <property type="entry name" value="ATP-synt_VA_C"/>
</dbReference>
<dbReference type="InterPro" id="IPR005722">
    <property type="entry name" value="ATP_synth_F1_bsu"/>
</dbReference>
<dbReference type="InterPro" id="IPR020003">
    <property type="entry name" value="ATPase_a/bsu_AS"/>
</dbReference>
<dbReference type="InterPro" id="IPR050053">
    <property type="entry name" value="ATPase_alpha/beta_chains"/>
</dbReference>
<dbReference type="InterPro" id="IPR004100">
    <property type="entry name" value="ATPase_F1/V1/A1_a/bsu_N"/>
</dbReference>
<dbReference type="InterPro" id="IPR036121">
    <property type="entry name" value="ATPase_F1/V1/A1_a/bsu_N_sf"/>
</dbReference>
<dbReference type="InterPro" id="IPR000194">
    <property type="entry name" value="ATPase_F1/V1/A1_a/bsu_nucl-bd"/>
</dbReference>
<dbReference type="InterPro" id="IPR024034">
    <property type="entry name" value="ATPase_F1/V1_b/a_C"/>
</dbReference>
<dbReference type="InterPro" id="IPR027417">
    <property type="entry name" value="P-loop_NTPase"/>
</dbReference>
<dbReference type="NCBIfam" id="TIGR01039">
    <property type="entry name" value="atpD"/>
    <property type="match status" value="1"/>
</dbReference>
<dbReference type="PANTHER" id="PTHR15184">
    <property type="entry name" value="ATP SYNTHASE"/>
    <property type="match status" value="1"/>
</dbReference>
<dbReference type="PANTHER" id="PTHR15184:SF71">
    <property type="entry name" value="ATP SYNTHASE SUBUNIT BETA, MITOCHONDRIAL"/>
    <property type="match status" value="1"/>
</dbReference>
<dbReference type="Pfam" id="PF00006">
    <property type="entry name" value="ATP-synt_ab"/>
    <property type="match status" value="1"/>
</dbReference>
<dbReference type="Pfam" id="PF02874">
    <property type="entry name" value="ATP-synt_ab_N"/>
    <property type="match status" value="1"/>
</dbReference>
<dbReference type="Pfam" id="PF22919">
    <property type="entry name" value="ATP-synt_VA_C"/>
    <property type="match status" value="1"/>
</dbReference>
<dbReference type="SMART" id="SM00382">
    <property type="entry name" value="AAA"/>
    <property type="match status" value="1"/>
</dbReference>
<dbReference type="SUPFAM" id="SSF47917">
    <property type="entry name" value="C-terminal domain of alpha and beta subunits of F1 ATP synthase"/>
    <property type="match status" value="1"/>
</dbReference>
<dbReference type="SUPFAM" id="SSF50615">
    <property type="entry name" value="N-terminal domain of alpha and beta subunits of F1 ATP synthase"/>
    <property type="match status" value="1"/>
</dbReference>
<dbReference type="SUPFAM" id="SSF52540">
    <property type="entry name" value="P-loop containing nucleoside triphosphate hydrolases"/>
    <property type="match status" value="1"/>
</dbReference>
<dbReference type="PROSITE" id="PS00152">
    <property type="entry name" value="ATPASE_ALPHA_BETA"/>
    <property type="match status" value="1"/>
</dbReference>
<organism>
    <name type="scientific">Legionella pneumophila (strain Lens)</name>
    <dbReference type="NCBI Taxonomy" id="297245"/>
    <lineage>
        <taxon>Bacteria</taxon>
        <taxon>Pseudomonadati</taxon>
        <taxon>Pseudomonadota</taxon>
        <taxon>Gammaproteobacteria</taxon>
        <taxon>Legionellales</taxon>
        <taxon>Legionellaceae</taxon>
        <taxon>Legionella</taxon>
    </lineage>
</organism>
<gene>
    <name evidence="1" type="primary">atpD</name>
    <name type="ordered locus">lpl2910</name>
</gene>
<evidence type="ECO:0000255" key="1">
    <source>
        <dbReference type="HAMAP-Rule" id="MF_01347"/>
    </source>
</evidence>
<proteinExistence type="inferred from homology"/>
<sequence length="458" mass="50026">MSLGTVVEVIGAVVDVEFPRDSVPKVNDALKLVDSDLVFEVQQQLGDGVVRTIAMGTTDGLKRGLKAENTGHPIQVPVGKKTLGRIMDVLGRPVDDAGPIDAEETWAIHRKAPSYEEQAGSQELLETGIKVIDLLCPFAKGGKVGLFGGAGVGKTVNMMELIRNIAIEHSGYSVFAGVGERTREGNDFYHEMKDSNVLDKVSLVYGQMNEPPGNRLRVALTGLTMAEKFRDEGRDVLLFIDNIYRYTLAGVEVSALLGRMPSAVGYQPTLAEEMGMLQERITSTKTGSITSIQAVYVPADDLTDPSPATTFAHLDATVVLSRQIAELGIYPAVDPLDSTSRQLDPLIVGQEHYDTARRVQQTLQRYKELKDIIAILGMDELSEEDKRVVTRARKIQRFLSQPFFVAEVFTGSPGKYVSLKDTIKGFQGILAGEYDDLPEQAFYMVGSIEEAVAKAKTL</sequence>
<accession>Q5WSG8</accession>
<name>ATPB_LEGPL</name>
<protein>
    <recommendedName>
        <fullName evidence="1">ATP synthase subunit beta</fullName>
        <ecNumber evidence="1">7.1.2.2</ecNumber>
    </recommendedName>
    <alternativeName>
        <fullName evidence="1">ATP synthase F1 sector subunit beta</fullName>
    </alternativeName>
    <alternativeName>
        <fullName evidence="1">F-ATPase subunit beta</fullName>
    </alternativeName>
</protein>
<keyword id="KW-0066">ATP synthesis</keyword>
<keyword id="KW-0067">ATP-binding</keyword>
<keyword id="KW-0997">Cell inner membrane</keyword>
<keyword id="KW-1003">Cell membrane</keyword>
<keyword id="KW-0139">CF(1)</keyword>
<keyword id="KW-0375">Hydrogen ion transport</keyword>
<keyword id="KW-0406">Ion transport</keyword>
<keyword id="KW-0472">Membrane</keyword>
<keyword id="KW-0547">Nucleotide-binding</keyword>
<keyword id="KW-1278">Translocase</keyword>
<keyword id="KW-0813">Transport</keyword>
<feature type="chain" id="PRO_0000254285" description="ATP synthase subunit beta">
    <location>
        <begin position="1"/>
        <end position="458"/>
    </location>
</feature>
<feature type="binding site" evidence="1">
    <location>
        <begin position="148"/>
        <end position="155"/>
    </location>
    <ligand>
        <name>ATP</name>
        <dbReference type="ChEBI" id="CHEBI:30616"/>
    </ligand>
</feature>
<reference key="1">
    <citation type="journal article" date="2004" name="Nat. Genet.">
        <title>Evidence in the Legionella pneumophila genome for exploitation of host cell functions and high genome plasticity.</title>
        <authorList>
            <person name="Cazalet C."/>
            <person name="Rusniok C."/>
            <person name="Brueggemann H."/>
            <person name="Zidane N."/>
            <person name="Magnier A."/>
            <person name="Ma L."/>
            <person name="Tichit M."/>
            <person name="Jarraud S."/>
            <person name="Bouchier C."/>
            <person name="Vandenesch F."/>
            <person name="Kunst F."/>
            <person name="Etienne J."/>
            <person name="Glaser P."/>
            <person name="Buchrieser C."/>
        </authorList>
    </citation>
    <scope>NUCLEOTIDE SEQUENCE [LARGE SCALE GENOMIC DNA]</scope>
    <source>
        <strain>Lens</strain>
    </source>
</reference>